<protein>
    <recommendedName>
        <fullName evidence="1">7-cyano-7-deazaguanine synthase</fullName>
        <ecNumber evidence="1">6.3.4.20</ecNumber>
    </recommendedName>
    <alternativeName>
        <fullName evidence="1">7-cyano-7-carbaguanine synthase</fullName>
    </alternativeName>
    <alternativeName>
        <fullName evidence="1">PreQ(0) synthase</fullName>
    </alternativeName>
    <alternativeName>
        <fullName evidence="1">Queuosine biosynthesis protein QueC</fullName>
    </alternativeName>
</protein>
<evidence type="ECO:0000255" key="1">
    <source>
        <dbReference type="HAMAP-Rule" id="MF_01633"/>
    </source>
</evidence>
<feature type="chain" id="PRO_1000186616" description="7-cyano-7-deazaguanine synthase">
    <location>
        <begin position="1"/>
        <end position="224"/>
    </location>
</feature>
<feature type="binding site" evidence="1">
    <location>
        <begin position="7"/>
        <end position="17"/>
    </location>
    <ligand>
        <name>ATP</name>
        <dbReference type="ChEBI" id="CHEBI:30616"/>
    </ligand>
</feature>
<feature type="binding site" evidence="1">
    <location>
        <position position="191"/>
    </location>
    <ligand>
        <name>Zn(2+)</name>
        <dbReference type="ChEBI" id="CHEBI:29105"/>
    </ligand>
</feature>
<feature type="binding site" evidence="1">
    <location>
        <position position="199"/>
    </location>
    <ligand>
        <name>Zn(2+)</name>
        <dbReference type="ChEBI" id="CHEBI:29105"/>
    </ligand>
</feature>
<feature type="binding site" evidence="1">
    <location>
        <position position="202"/>
    </location>
    <ligand>
        <name>Zn(2+)</name>
        <dbReference type="ChEBI" id="CHEBI:29105"/>
    </ligand>
</feature>
<feature type="binding site" evidence="1">
    <location>
        <position position="205"/>
    </location>
    <ligand>
        <name>Zn(2+)</name>
        <dbReference type="ChEBI" id="CHEBI:29105"/>
    </ligand>
</feature>
<organism>
    <name type="scientific">Nostoc punctiforme (strain ATCC 29133 / PCC 73102)</name>
    <dbReference type="NCBI Taxonomy" id="63737"/>
    <lineage>
        <taxon>Bacteria</taxon>
        <taxon>Bacillati</taxon>
        <taxon>Cyanobacteriota</taxon>
        <taxon>Cyanophyceae</taxon>
        <taxon>Nostocales</taxon>
        <taxon>Nostocaceae</taxon>
        <taxon>Nostoc</taxon>
    </lineage>
</organism>
<sequence>MKAVILLSGGLDSSTILYKAKADGCECHAISFDYQQRHRQELQSALTVAKKAAIAKHQVVNFDLRQWGGSALTDDAIDLPQQRSLDEMSQNIPVTYVPARNTIFLSFALGYAEAIAAERVYIGVNALDYSGYPDCRPDYIEAMQEVFRLGTKQGREGQPIKIVAPLINLKKTEIIQLGNELGVPWELTWSCYAGNDVACGVCDSCRLRLAAFAELGLVDPLVYA</sequence>
<reference key="1">
    <citation type="journal article" date="2013" name="Plant Physiol.">
        <title>A Nostoc punctiforme Sugar Transporter Necessary to Establish a Cyanobacterium-Plant Symbiosis.</title>
        <authorList>
            <person name="Ekman M."/>
            <person name="Picossi S."/>
            <person name="Campbell E.L."/>
            <person name="Meeks J.C."/>
            <person name="Flores E."/>
        </authorList>
    </citation>
    <scope>NUCLEOTIDE SEQUENCE [LARGE SCALE GENOMIC DNA]</scope>
    <source>
        <strain>ATCC 29133 / PCC 73102</strain>
    </source>
</reference>
<dbReference type="EC" id="6.3.4.20" evidence="1"/>
<dbReference type="EMBL" id="CP001037">
    <property type="protein sequence ID" value="ACC82842.1"/>
    <property type="molecule type" value="Genomic_DNA"/>
</dbReference>
<dbReference type="RefSeq" id="WP_012410803.1">
    <property type="nucleotide sequence ID" value="NC_010628.1"/>
</dbReference>
<dbReference type="SMR" id="B2IUR7"/>
<dbReference type="STRING" id="63737.Npun_F4475"/>
<dbReference type="EnsemblBacteria" id="ACC82842">
    <property type="protein sequence ID" value="ACC82842"/>
    <property type="gene ID" value="Npun_F4475"/>
</dbReference>
<dbReference type="KEGG" id="npu:Npun_F4475"/>
<dbReference type="eggNOG" id="COG0603">
    <property type="taxonomic scope" value="Bacteria"/>
</dbReference>
<dbReference type="HOGENOM" id="CLU_081854_1_0_3"/>
<dbReference type="OrthoDB" id="9789567at2"/>
<dbReference type="PhylomeDB" id="B2IUR7"/>
<dbReference type="UniPathway" id="UPA00391"/>
<dbReference type="Proteomes" id="UP000001191">
    <property type="component" value="Chromosome"/>
</dbReference>
<dbReference type="GO" id="GO:0005524">
    <property type="term" value="F:ATP binding"/>
    <property type="evidence" value="ECO:0007669"/>
    <property type="project" value="UniProtKB-UniRule"/>
</dbReference>
<dbReference type="GO" id="GO:0016879">
    <property type="term" value="F:ligase activity, forming carbon-nitrogen bonds"/>
    <property type="evidence" value="ECO:0007669"/>
    <property type="project" value="UniProtKB-UniRule"/>
</dbReference>
<dbReference type="GO" id="GO:0008270">
    <property type="term" value="F:zinc ion binding"/>
    <property type="evidence" value="ECO:0007669"/>
    <property type="project" value="UniProtKB-UniRule"/>
</dbReference>
<dbReference type="GO" id="GO:0008616">
    <property type="term" value="P:queuosine biosynthetic process"/>
    <property type="evidence" value="ECO:0007669"/>
    <property type="project" value="UniProtKB-UniRule"/>
</dbReference>
<dbReference type="CDD" id="cd01995">
    <property type="entry name" value="QueC-like"/>
    <property type="match status" value="1"/>
</dbReference>
<dbReference type="Gene3D" id="3.40.50.620">
    <property type="entry name" value="HUPs"/>
    <property type="match status" value="1"/>
</dbReference>
<dbReference type="HAMAP" id="MF_01633">
    <property type="entry name" value="QueC"/>
    <property type="match status" value="1"/>
</dbReference>
<dbReference type="InterPro" id="IPR018317">
    <property type="entry name" value="QueC"/>
</dbReference>
<dbReference type="InterPro" id="IPR014729">
    <property type="entry name" value="Rossmann-like_a/b/a_fold"/>
</dbReference>
<dbReference type="NCBIfam" id="TIGR00364">
    <property type="entry name" value="7-cyano-7-deazaguanine synthase QueC"/>
    <property type="match status" value="1"/>
</dbReference>
<dbReference type="PANTHER" id="PTHR42914">
    <property type="entry name" value="7-CYANO-7-DEAZAGUANINE SYNTHASE"/>
    <property type="match status" value="1"/>
</dbReference>
<dbReference type="PANTHER" id="PTHR42914:SF1">
    <property type="entry name" value="7-CYANO-7-DEAZAGUANINE SYNTHASE"/>
    <property type="match status" value="1"/>
</dbReference>
<dbReference type="Pfam" id="PF06508">
    <property type="entry name" value="QueC"/>
    <property type="match status" value="1"/>
</dbReference>
<dbReference type="PIRSF" id="PIRSF006293">
    <property type="entry name" value="ExsB"/>
    <property type="match status" value="1"/>
</dbReference>
<dbReference type="SUPFAM" id="SSF52402">
    <property type="entry name" value="Adenine nucleotide alpha hydrolases-like"/>
    <property type="match status" value="1"/>
</dbReference>
<keyword id="KW-0067">ATP-binding</keyword>
<keyword id="KW-0436">Ligase</keyword>
<keyword id="KW-0479">Metal-binding</keyword>
<keyword id="KW-0547">Nucleotide-binding</keyword>
<keyword id="KW-0671">Queuosine biosynthesis</keyword>
<keyword id="KW-1185">Reference proteome</keyword>
<keyword id="KW-0862">Zinc</keyword>
<comment type="function">
    <text evidence="1">Catalyzes the ATP-dependent conversion of 7-carboxy-7-deazaguanine (CDG) to 7-cyano-7-deazaguanine (preQ(0)).</text>
</comment>
<comment type="catalytic activity">
    <reaction evidence="1">
        <text>7-carboxy-7-deazaguanine + NH4(+) + ATP = 7-cyano-7-deazaguanine + ADP + phosphate + H2O + H(+)</text>
        <dbReference type="Rhea" id="RHEA:27982"/>
        <dbReference type="ChEBI" id="CHEBI:15377"/>
        <dbReference type="ChEBI" id="CHEBI:15378"/>
        <dbReference type="ChEBI" id="CHEBI:28938"/>
        <dbReference type="ChEBI" id="CHEBI:30616"/>
        <dbReference type="ChEBI" id="CHEBI:43474"/>
        <dbReference type="ChEBI" id="CHEBI:45075"/>
        <dbReference type="ChEBI" id="CHEBI:61036"/>
        <dbReference type="ChEBI" id="CHEBI:456216"/>
        <dbReference type="EC" id="6.3.4.20"/>
    </reaction>
</comment>
<comment type="cofactor">
    <cofactor evidence="1">
        <name>Zn(2+)</name>
        <dbReference type="ChEBI" id="CHEBI:29105"/>
    </cofactor>
    <text evidence="1">Binds 1 zinc ion per subunit.</text>
</comment>
<comment type="pathway">
    <text evidence="1">Purine metabolism; 7-cyano-7-deazaguanine biosynthesis.</text>
</comment>
<comment type="similarity">
    <text evidence="1">Belongs to the QueC family.</text>
</comment>
<gene>
    <name evidence="1" type="primary">queC</name>
    <name type="ordered locus">Npun_F4475</name>
</gene>
<accession>B2IUR7</accession>
<name>QUEC_NOSP7</name>
<proteinExistence type="inferred from homology"/>